<gene>
    <name evidence="1" type="primary">wecG</name>
    <name evidence="1" type="synonym">rffM</name>
    <name type="ordered locus">ECS88_4218</name>
</gene>
<dbReference type="EC" id="2.4.1.180" evidence="1"/>
<dbReference type="EMBL" id="CU928161">
    <property type="protein sequence ID" value="CAR05413.1"/>
    <property type="molecule type" value="Genomic_DNA"/>
</dbReference>
<dbReference type="RefSeq" id="WP_001064047.1">
    <property type="nucleotide sequence ID" value="NC_011742.1"/>
</dbReference>
<dbReference type="SMR" id="B7MH59"/>
<dbReference type="CAZy" id="GT26">
    <property type="family name" value="Glycosyltransferase Family 26"/>
</dbReference>
<dbReference type="KEGG" id="ecz:ECS88_4218"/>
<dbReference type="HOGENOM" id="CLU_063203_3_2_6"/>
<dbReference type="UniPathway" id="UPA00566"/>
<dbReference type="Proteomes" id="UP000000747">
    <property type="component" value="Chromosome"/>
</dbReference>
<dbReference type="GO" id="GO:0047241">
    <property type="term" value="F:lipopolysaccharide N-acetylmannosaminouronosyltransferase activity"/>
    <property type="evidence" value="ECO:0007669"/>
    <property type="project" value="UniProtKB-UniRule"/>
</dbReference>
<dbReference type="GO" id="GO:0009246">
    <property type="term" value="P:enterobacterial common antigen biosynthetic process"/>
    <property type="evidence" value="ECO:0007669"/>
    <property type="project" value="UniProtKB-UniRule"/>
</dbReference>
<dbReference type="CDD" id="cd06533">
    <property type="entry name" value="Glyco_transf_WecG_TagA"/>
    <property type="match status" value="1"/>
</dbReference>
<dbReference type="HAMAP" id="MF_01001">
    <property type="entry name" value="WecG_RffM"/>
    <property type="match status" value="1"/>
</dbReference>
<dbReference type="InterPro" id="IPR023085">
    <property type="entry name" value="UDP-ManNAcA_Trfase_WecG"/>
</dbReference>
<dbReference type="InterPro" id="IPR004629">
    <property type="entry name" value="WecG_TagA_CpsF"/>
</dbReference>
<dbReference type="NCBIfam" id="NF002980">
    <property type="entry name" value="PRK03692.1"/>
    <property type="match status" value="1"/>
</dbReference>
<dbReference type="NCBIfam" id="TIGR00696">
    <property type="entry name" value="wecG_tagA_cpsF"/>
    <property type="match status" value="1"/>
</dbReference>
<dbReference type="PANTHER" id="PTHR34136">
    <property type="match status" value="1"/>
</dbReference>
<dbReference type="PANTHER" id="PTHR34136:SF1">
    <property type="entry name" value="UDP-N-ACETYL-D-MANNOSAMINURONIC ACID TRANSFERASE"/>
    <property type="match status" value="1"/>
</dbReference>
<dbReference type="Pfam" id="PF03808">
    <property type="entry name" value="Glyco_tran_WecG"/>
    <property type="match status" value="1"/>
</dbReference>
<comment type="function">
    <text evidence="1">Catalyzes the synthesis of Und-PP-GlcNAc-ManNAcA (Lipid II), the second lipid-linked intermediate involved in enterobacterial common antigen (ECA) synthesis.</text>
</comment>
<comment type="catalytic activity">
    <reaction evidence="1">
        <text>UDP-N-acetyl-alpha-D-mannosaminouronate + N-acetyl-alpha-D-glucosaminyl-di-trans,octa-cis-undecaprenyl diphosphate = beta-D-ManNAcA-(1-&gt;4)-alpha-D-GlcNAc-di-trans,octa-cis-undecaprenyl diphosphate + UDP + H(+)</text>
        <dbReference type="Rhea" id="RHEA:28366"/>
        <dbReference type="ChEBI" id="CHEBI:15378"/>
        <dbReference type="ChEBI" id="CHEBI:58223"/>
        <dbReference type="ChEBI" id="CHEBI:61495"/>
        <dbReference type="ChEBI" id="CHEBI:62959"/>
        <dbReference type="ChEBI" id="CHEBI:70731"/>
        <dbReference type="EC" id="2.4.1.180"/>
    </reaction>
</comment>
<comment type="pathway">
    <text evidence="1">Bacterial outer membrane biogenesis; enterobacterial common antigen biosynthesis.</text>
</comment>
<comment type="similarity">
    <text evidence="1">Belongs to the glycosyltransferase 26 family.</text>
</comment>
<sequence length="246" mass="27977">MNNNTTAPTYTLRGLQLIGWRDMQHALDYLFADGQLKQGTLVAINAEKMLTIEDNAEVRELINAAEFKYADGISVVRSVRKKYPQAQVSRVAGADLWEELMARAGKEGTQVFLVGGKPEVLAQTEAKLRNQWNVNIVGSQDGYFKPEQRQALFERIHASGAQIVTVAMGAPKQEIFMRDCRLVHPDALYMGVGGTYDVFTGHVKRAPKIWQTLGLEWLYRLLSQPSRIKRQLRLLRYLRWHYTGNL</sequence>
<name>WECG_ECO45</name>
<feature type="chain" id="PRO_1000134571" description="UDP-N-acetyl-D-mannosaminuronic acid transferase">
    <location>
        <begin position="1"/>
        <end position="246"/>
    </location>
</feature>
<keyword id="KW-0328">Glycosyltransferase</keyword>
<keyword id="KW-1185">Reference proteome</keyword>
<keyword id="KW-0808">Transferase</keyword>
<accession>B7MH59</accession>
<evidence type="ECO:0000255" key="1">
    <source>
        <dbReference type="HAMAP-Rule" id="MF_01001"/>
    </source>
</evidence>
<reference key="1">
    <citation type="journal article" date="2009" name="PLoS Genet.">
        <title>Organised genome dynamics in the Escherichia coli species results in highly diverse adaptive paths.</title>
        <authorList>
            <person name="Touchon M."/>
            <person name="Hoede C."/>
            <person name="Tenaillon O."/>
            <person name="Barbe V."/>
            <person name="Baeriswyl S."/>
            <person name="Bidet P."/>
            <person name="Bingen E."/>
            <person name="Bonacorsi S."/>
            <person name="Bouchier C."/>
            <person name="Bouvet O."/>
            <person name="Calteau A."/>
            <person name="Chiapello H."/>
            <person name="Clermont O."/>
            <person name="Cruveiller S."/>
            <person name="Danchin A."/>
            <person name="Diard M."/>
            <person name="Dossat C."/>
            <person name="Karoui M.E."/>
            <person name="Frapy E."/>
            <person name="Garry L."/>
            <person name="Ghigo J.M."/>
            <person name="Gilles A.M."/>
            <person name="Johnson J."/>
            <person name="Le Bouguenec C."/>
            <person name="Lescat M."/>
            <person name="Mangenot S."/>
            <person name="Martinez-Jehanne V."/>
            <person name="Matic I."/>
            <person name="Nassif X."/>
            <person name="Oztas S."/>
            <person name="Petit M.A."/>
            <person name="Pichon C."/>
            <person name="Rouy Z."/>
            <person name="Ruf C.S."/>
            <person name="Schneider D."/>
            <person name="Tourret J."/>
            <person name="Vacherie B."/>
            <person name="Vallenet D."/>
            <person name="Medigue C."/>
            <person name="Rocha E.P.C."/>
            <person name="Denamur E."/>
        </authorList>
    </citation>
    <scope>NUCLEOTIDE SEQUENCE [LARGE SCALE GENOMIC DNA]</scope>
    <source>
        <strain>S88 / ExPEC</strain>
    </source>
</reference>
<organism>
    <name type="scientific">Escherichia coli O45:K1 (strain S88 / ExPEC)</name>
    <dbReference type="NCBI Taxonomy" id="585035"/>
    <lineage>
        <taxon>Bacteria</taxon>
        <taxon>Pseudomonadati</taxon>
        <taxon>Pseudomonadota</taxon>
        <taxon>Gammaproteobacteria</taxon>
        <taxon>Enterobacterales</taxon>
        <taxon>Enterobacteriaceae</taxon>
        <taxon>Escherichia</taxon>
    </lineage>
</organism>
<protein>
    <recommendedName>
        <fullName evidence="1">UDP-N-acetyl-D-mannosaminuronic acid transferase</fullName>
        <shortName evidence="1">UDP-ManNAcA transferase</shortName>
        <ecNumber evidence="1">2.4.1.180</ecNumber>
    </recommendedName>
</protein>
<proteinExistence type="inferred from homology"/>